<comment type="function">
    <text evidence="1">Involved in mRNA degradation. Catalyzes the phosphorolysis of single-stranded polyribonucleotides processively in the 3'- to 5'-direction.</text>
</comment>
<comment type="catalytic activity">
    <reaction evidence="1">
        <text>RNA(n+1) + phosphate = RNA(n) + a ribonucleoside 5'-diphosphate</text>
        <dbReference type="Rhea" id="RHEA:22096"/>
        <dbReference type="Rhea" id="RHEA-COMP:14527"/>
        <dbReference type="Rhea" id="RHEA-COMP:17342"/>
        <dbReference type="ChEBI" id="CHEBI:43474"/>
        <dbReference type="ChEBI" id="CHEBI:57930"/>
        <dbReference type="ChEBI" id="CHEBI:140395"/>
        <dbReference type="EC" id="2.7.7.8"/>
    </reaction>
</comment>
<comment type="cofactor">
    <cofactor evidence="1">
        <name>Mg(2+)</name>
        <dbReference type="ChEBI" id="CHEBI:18420"/>
    </cofactor>
</comment>
<comment type="subcellular location">
    <subcellularLocation>
        <location evidence="1">Cytoplasm</location>
    </subcellularLocation>
</comment>
<comment type="similarity">
    <text evidence="1">Belongs to the polyribonucleotide nucleotidyltransferase family.</text>
</comment>
<proteinExistence type="inferred from homology"/>
<gene>
    <name evidence="1" type="primary">pnp</name>
    <name type="ordered locus">Pnec_0817</name>
</gene>
<dbReference type="EC" id="2.7.7.8" evidence="1"/>
<dbReference type="EMBL" id="CP001010">
    <property type="protein sequence ID" value="ACB44022.1"/>
    <property type="molecule type" value="Genomic_DNA"/>
</dbReference>
<dbReference type="SMR" id="B1XUJ5"/>
<dbReference type="STRING" id="452638.Pnec_0817"/>
<dbReference type="KEGG" id="pne:Pnec_0817"/>
<dbReference type="eggNOG" id="COG1185">
    <property type="taxonomic scope" value="Bacteria"/>
</dbReference>
<dbReference type="HOGENOM" id="CLU_004217_2_2_4"/>
<dbReference type="OrthoDB" id="9804305at2"/>
<dbReference type="GO" id="GO:0005829">
    <property type="term" value="C:cytosol"/>
    <property type="evidence" value="ECO:0007669"/>
    <property type="project" value="TreeGrafter"/>
</dbReference>
<dbReference type="GO" id="GO:0000175">
    <property type="term" value="F:3'-5'-RNA exonuclease activity"/>
    <property type="evidence" value="ECO:0007669"/>
    <property type="project" value="TreeGrafter"/>
</dbReference>
<dbReference type="GO" id="GO:0000287">
    <property type="term" value="F:magnesium ion binding"/>
    <property type="evidence" value="ECO:0007669"/>
    <property type="project" value="UniProtKB-UniRule"/>
</dbReference>
<dbReference type="GO" id="GO:0004654">
    <property type="term" value="F:polyribonucleotide nucleotidyltransferase activity"/>
    <property type="evidence" value="ECO:0007669"/>
    <property type="project" value="UniProtKB-UniRule"/>
</dbReference>
<dbReference type="GO" id="GO:0003723">
    <property type="term" value="F:RNA binding"/>
    <property type="evidence" value="ECO:0007669"/>
    <property type="project" value="UniProtKB-UniRule"/>
</dbReference>
<dbReference type="GO" id="GO:0006402">
    <property type="term" value="P:mRNA catabolic process"/>
    <property type="evidence" value="ECO:0007669"/>
    <property type="project" value="UniProtKB-UniRule"/>
</dbReference>
<dbReference type="GO" id="GO:0006396">
    <property type="term" value="P:RNA processing"/>
    <property type="evidence" value="ECO:0007669"/>
    <property type="project" value="InterPro"/>
</dbReference>
<dbReference type="CDD" id="cd02393">
    <property type="entry name" value="KH-I_PNPase"/>
    <property type="match status" value="1"/>
</dbReference>
<dbReference type="CDD" id="cd11364">
    <property type="entry name" value="RNase_PH_PNPase_2"/>
    <property type="match status" value="1"/>
</dbReference>
<dbReference type="CDD" id="cd04472">
    <property type="entry name" value="S1_PNPase"/>
    <property type="match status" value="1"/>
</dbReference>
<dbReference type="FunFam" id="3.30.1370.10:FF:000001">
    <property type="entry name" value="Polyribonucleotide nucleotidyltransferase"/>
    <property type="match status" value="1"/>
</dbReference>
<dbReference type="FunFam" id="3.30.230.70:FF:000001">
    <property type="entry name" value="Polyribonucleotide nucleotidyltransferase"/>
    <property type="match status" value="1"/>
</dbReference>
<dbReference type="FunFam" id="3.30.230.70:FF:000002">
    <property type="entry name" value="Polyribonucleotide nucleotidyltransferase"/>
    <property type="match status" value="1"/>
</dbReference>
<dbReference type="FunFam" id="2.40.50.140:FF:000189">
    <property type="entry name" value="Polyribonucleotide nucleotidyltransferase, putative"/>
    <property type="match status" value="1"/>
</dbReference>
<dbReference type="Gene3D" id="3.30.230.70">
    <property type="entry name" value="GHMP Kinase, N-terminal domain"/>
    <property type="match status" value="2"/>
</dbReference>
<dbReference type="Gene3D" id="3.30.1370.10">
    <property type="entry name" value="K Homology domain, type 1"/>
    <property type="match status" value="1"/>
</dbReference>
<dbReference type="Gene3D" id="2.40.50.140">
    <property type="entry name" value="Nucleic acid-binding proteins"/>
    <property type="match status" value="1"/>
</dbReference>
<dbReference type="HAMAP" id="MF_01595">
    <property type="entry name" value="PNPase"/>
    <property type="match status" value="1"/>
</dbReference>
<dbReference type="InterPro" id="IPR001247">
    <property type="entry name" value="ExoRNase_PH_dom1"/>
</dbReference>
<dbReference type="InterPro" id="IPR015847">
    <property type="entry name" value="ExoRNase_PH_dom2"/>
</dbReference>
<dbReference type="InterPro" id="IPR036345">
    <property type="entry name" value="ExoRNase_PH_dom2_sf"/>
</dbReference>
<dbReference type="InterPro" id="IPR004087">
    <property type="entry name" value="KH_dom"/>
</dbReference>
<dbReference type="InterPro" id="IPR004088">
    <property type="entry name" value="KH_dom_type_1"/>
</dbReference>
<dbReference type="InterPro" id="IPR036612">
    <property type="entry name" value="KH_dom_type_1_sf"/>
</dbReference>
<dbReference type="InterPro" id="IPR012340">
    <property type="entry name" value="NA-bd_OB-fold"/>
</dbReference>
<dbReference type="InterPro" id="IPR012162">
    <property type="entry name" value="PNPase"/>
</dbReference>
<dbReference type="InterPro" id="IPR027408">
    <property type="entry name" value="PNPase/RNase_PH_dom_sf"/>
</dbReference>
<dbReference type="InterPro" id="IPR015848">
    <property type="entry name" value="PNPase_PH_RNA-bd_bac/org-type"/>
</dbReference>
<dbReference type="InterPro" id="IPR020568">
    <property type="entry name" value="Ribosomal_Su5_D2-typ_SF"/>
</dbReference>
<dbReference type="InterPro" id="IPR003029">
    <property type="entry name" value="S1_domain"/>
</dbReference>
<dbReference type="NCBIfam" id="TIGR03591">
    <property type="entry name" value="polynuc_phos"/>
    <property type="match status" value="1"/>
</dbReference>
<dbReference type="NCBIfam" id="NF008805">
    <property type="entry name" value="PRK11824.1"/>
    <property type="match status" value="1"/>
</dbReference>
<dbReference type="PANTHER" id="PTHR11252">
    <property type="entry name" value="POLYRIBONUCLEOTIDE NUCLEOTIDYLTRANSFERASE"/>
    <property type="match status" value="1"/>
</dbReference>
<dbReference type="PANTHER" id="PTHR11252:SF0">
    <property type="entry name" value="POLYRIBONUCLEOTIDE NUCLEOTIDYLTRANSFERASE 1, MITOCHONDRIAL"/>
    <property type="match status" value="1"/>
</dbReference>
<dbReference type="Pfam" id="PF00013">
    <property type="entry name" value="KH_1"/>
    <property type="match status" value="1"/>
</dbReference>
<dbReference type="Pfam" id="PF03726">
    <property type="entry name" value="PNPase"/>
    <property type="match status" value="1"/>
</dbReference>
<dbReference type="Pfam" id="PF01138">
    <property type="entry name" value="RNase_PH"/>
    <property type="match status" value="2"/>
</dbReference>
<dbReference type="Pfam" id="PF03725">
    <property type="entry name" value="RNase_PH_C"/>
    <property type="match status" value="2"/>
</dbReference>
<dbReference type="Pfam" id="PF00575">
    <property type="entry name" value="S1"/>
    <property type="match status" value="1"/>
</dbReference>
<dbReference type="PIRSF" id="PIRSF005499">
    <property type="entry name" value="PNPase"/>
    <property type="match status" value="1"/>
</dbReference>
<dbReference type="SMART" id="SM00322">
    <property type="entry name" value="KH"/>
    <property type="match status" value="1"/>
</dbReference>
<dbReference type="SMART" id="SM00316">
    <property type="entry name" value="S1"/>
    <property type="match status" value="1"/>
</dbReference>
<dbReference type="SUPFAM" id="SSF54791">
    <property type="entry name" value="Eukaryotic type KH-domain (KH-domain type I)"/>
    <property type="match status" value="1"/>
</dbReference>
<dbReference type="SUPFAM" id="SSF50249">
    <property type="entry name" value="Nucleic acid-binding proteins"/>
    <property type="match status" value="1"/>
</dbReference>
<dbReference type="SUPFAM" id="SSF55666">
    <property type="entry name" value="Ribonuclease PH domain 2-like"/>
    <property type="match status" value="2"/>
</dbReference>
<dbReference type="SUPFAM" id="SSF54211">
    <property type="entry name" value="Ribosomal protein S5 domain 2-like"/>
    <property type="match status" value="2"/>
</dbReference>
<dbReference type="PROSITE" id="PS50084">
    <property type="entry name" value="KH_TYPE_1"/>
    <property type="match status" value="1"/>
</dbReference>
<dbReference type="PROSITE" id="PS50126">
    <property type="entry name" value="S1"/>
    <property type="match status" value="1"/>
</dbReference>
<reference key="1">
    <citation type="journal article" date="2013" name="Proc. Natl. Acad. Sci. U.S.A.">
        <title>Polynucleobacter necessarius, a model for genome reduction in both free-living and symbiotic bacteria.</title>
        <authorList>
            <person name="Boscaro V."/>
            <person name="Felletti M."/>
            <person name="Vannini C."/>
            <person name="Ackerman M.S."/>
            <person name="Chain P.S."/>
            <person name="Malfatti S."/>
            <person name="Vergez L.M."/>
            <person name="Shin M."/>
            <person name="Doak T.G."/>
            <person name="Lynch M."/>
            <person name="Petroni G."/>
        </authorList>
    </citation>
    <scope>NUCLEOTIDE SEQUENCE [LARGE SCALE GENOMIC DNA]</scope>
    <source>
        <strain>STIR1</strain>
    </source>
</reference>
<organism>
    <name type="scientific">Polynucleobacter necessarius subsp. necessarius (strain STIR1)</name>
    <dbReference type="NCBI Taxonomy" id="452638"/>
    <lineage>
        <taxon>Bacteria</taxon>
        <taxon>Pseudomonadati</taxon>
        <taxon>Pseudomonadota</taxon>
        <taxon>Betaproteobacteria</taxon>
        <taxon>Burkholderiales</taxon>
        <taxon>Burkholderiaceae</taxon>
        <taxon>Polynucleobacter</taxon>
    </lineage>
</organism>
<name>PNP_POLNS</name>
<accession>B1XUJ5</accession>
<protein>
    <recommendedName>
        <fullName evidence="1">Polyribonucleotide nucleotidyltransferase</fullName>
        <ecNumber evidence="1">2.7.7.8</ecNumber>
    </recommendedName>
    <alternativeName>
        <fullName evidence="1">Polynucleotide phosphorylase</fullName>
        <shortName evidence="1">PNPase</shortName>
    </alternativeName>
</protein>
<evidence type="ECO:0000255" key="1">
    <source>
        <dbReference type="HAMAP-Rule" id="MF_01595"/>
    </source>
</evidence>
<keyword id="KW-0963">Cytoplasm</keyword>
<keyword id="KW-0460">Magnesium</keyword>
<keyword id="KW-0479">Metal-binding</keyword>
<keyword id="KW-0548">Nucleotidyltransferase</keyword>
<keyword id="KW-0694">RNA-binding</keyword>
<keyword id="KW-0808">Transferase</keyword>
<feature type="chain" id="PRO_1000192482" description="Polyribonucleotide nucleotidyltransferase">
    <location>
        <begin position="1"/>
        <end position="722"/>
    </location>
</feature>
<feature type="domain" description="KH" evidence="1">
    <location>
        <begin position="554"/>
        <end position="613"/>
    </location>
</feature>
<feature type="domain" description="S1 motif" evidence="1">
    <location>
        <begin position="623"/>
        <end position="691"/>
    </location>
</feature>
<feature type="binding site" evidence="1">
    <location>
        <position position="487"/>
    </location>
    <ligand>
        <name>Mg(2+)</name>
        <dbReference type="ChEBI" id="CHEBI:18420"/>
    </ligand>
</feature>
<feature type="binding site" evidence="1">
    <location>
        <position position="493"/>
    </location>
    <ligand>
        <name>Mg(2+)</name>
        <dbReference type="ChEBI" id="CHEBI:18420"/>
    </ligand>
</feature>
<sequence length="722" mass="77109">MTMFKKAVKSFQWGTYQVTMETGEIARQAGGAVIVNVDDTVVMGTVVASKSAKPGQSFFPLTVDYLEKTYAAGKIPGGFFRREGRPSEGETLISRLIDRPLRPLFPEGFLNEVQVVVHVLSINPDVPSDIPALIAASAALAVSSIPFAGPVGAARVGYANGQYLLNPTRTEQATSELDLIVAGTQAAVLMVESEANQLSEEVMLGAVVYGHDQMQTAINAINDLVCEAGKPEWDWTAAPKDEPFIAKVTALAEAPLREAYQIRQKGARSDKLKEISKEVMAKLSEEGDVDAVAVSDIMFEIEAKIVRSQILNGEPRIDGRDTRTVRPIEIRNGVLPRTHGSALFTRGETQALVVATLGTARDEQIIDVLEGEYRDRFMFHYNMPPFATGETGRVGSPKRREIGHGRLAKRALIPVLPSAEDFAYSIRVVSEITESNGSSSMASVCGGCLAMMDAGVPVKAHVAGVAMGLILDGNRFAVLTDILGDEDHLGDMDFKVAGTANGITALQMDIKVQGITKEIMQVALAQAKEGRLHILSKMQEAMGSVRTELSAHAPRMVSFKIHPDKIREVIGKGGATIQALTKETGCSIDIKDDGTVTIASTSAEGMAEAKARIEGITAEAEVGKIYEGPVVKLLEFGALVNILPGKDGLLHISEISNERVKEVKDYLAEGQVVRVKLLAADERGRLRLSLKAAMADEGGTIAPLAGAAEVATEAAPATGESA</sequence>